<organism>
    <name type="scientific">Cereibacter sphaeroides (strain ATCC 17029 / ATH 2.4.9)</name>
    <name type="common">Rhodobacter sphaeroides</name>
    <dbReference type="NCBI Taxonomy" id="349101"/>
    <lineage>
        <taxon>Bacteria</taxon>
        <taxon>Pseudomonadati</taxon>
        <taxon>Pseudomonadota</taxon>
        <taxon>Alphaproteobacteria</taxon>
        <taxon>Rhodobacterales</taxon>
        <taxon>Paracoccaceae</taxon>
        <taxon>Cereibacter</taxon>
    </lineage>
</organism>
<sequence length="646" mass="73338">MAQISLTFPDGKAREFPAGITPAEVAASISTSLGKKAISASVDGRHYDLQWPIETDAKIAIHTMADEAQALELIRHDLAHIMARAVQELWPDVKVTIGPVVANGWYYDFDREETFTPEDLGAIEKRMKEIINAREAVKTELWERARAIGYYEERGEPFKVELVQAIPEDQSIRMYWHGGWQDLCRGPHLQHTGQVPADAFKLMSVAGAYWRGDSANKQLQRIYGVAFKTRDELKAYLHMLEEAAKRDHRKLGREMELFHLQEEAPGMVFWHPNGWQIYRTLEDYMRGRLRQAGYKEIRTPQVVDRKLWEASGHWEAYKENMFIVEVEEEHAKEKRINALKPMNCPCHVQVYNQGLKSYRDLPLRLAEFGSCHRYESSGSMHGLMRVRGFVQDDAHIFCTEDQIESECAAFIELLSSVYKDLGFDSFEIKLSTRPEVRIGSDEAWDKVETALENAIRKVGAAYEIDPGEGAFYGPKLDFKLTDAIGRKWQCGTFQVDPNLPTRLGAEYIGEDGAKHRPYMLHRAILGSFERFIGILIENYAGKLPFWLAPRQVVVASIVSDADPYVAEVVAALRARGVRAEADTRNEKINYKVREHSVGKVPVILAIGMQEVEARSVSVRRLGETRTESMGLDQVVDQLAADARIPG</sequence>
<gene>
    <name evidence="1" type="primary">thrS</name>
    <name type="ordered locus">Rsph17029_2039</name>
</gene>
<keyword id="KW-0030">Aminoacyl-tRNA synthetase</keyword>
<keyword id="KW-0067">ATP-binding</keyword>
<keyword id="KW-0963">Cytoplasm</keyword>
<keyword id="KW-0436">Ligase</keyword>
<keyword id="KW-0479">Metal-binding</keyword>
<keyword id="KW-0547">Nucleotide-binding</keyword>
<keyword id="KW-0648">Protein biosynthesis</keyword>
<keyword id="KW-0694">RNA-binding</keyword>
<keyword id="KW-0820">tRNA-binding</keyword>
<keyword id="KW-0862">Zinc</keyword>
<dbReference type="EC" id="6.1.1.3" evidence="1"/>
<dbReference type="EMBL" id="CP000577">
    <property type="protein sequence ID" value="ABN77142.1"/>
    <property type="molecule type" value="Genomic_DNA"/>
</dbReference>
<dbReference type="RefSeq" id="WP_011841400.1">
    <property type="nucleotide sequence ID" value="NC_009049.1"/>
</dbReference>
<dbReference type="SMR" id="A3PLC6"/>
<dbReference type="KEGG" id="rsh:Rsph17029_2039"/>
<dbReference type="HOGENOM" id="CLU_008554_0_1_5"/>
<dbReference type="GO" id="GO:0005737">
    <property type="term" value="C:cytoplasm"/>
    <property type="evidence" value="ECO:0007669"/>
    <property type="project" value="UniProtKB-SubCell"/>
</dbReference>
<dbReference type="GO" id="GO:0005524">
    <property type="term" value="F:ATP binding"/>
    <property type="evidence" value="ECO:0007669"/>
    <property type="project" value="UniProtKB-UniRule"/>
</dbReference>
<dbReference type="GO" id="GO:0046872">
    <property type="term" value="F:metal ion binding"/>
    <property type="evidence" value="ECO:0007669"/>
    <property type="project" value="UniProtKB-KW"/>
</dbReference>
<dbReference type="GO" id="GO:0004829">
    <property type="term" value="F:threonine-tRNA ligase activity"/>
    <property type="evidence" value="ECO:0007669"/>
    <property type="project" value="UniProtKB-UniRule"/>
</dbReference>
<dbReference type="GO" id="GO:0000049">
    <property type="term" value="F:tRNA binding"/>
    <property type="evidence" value="ECO:0007669"/>
    <property type="project" value="UniProtKB-KW"/>
</dbReference>
<dbReference type="GO" id="GO:0006435">
    <property type="term" value="P:threonyl-tRNA aminoacylation"/>
    <property type="evidence" value="ECO:0007669"/>
    <property type="project" value="UniProtKB-UniRule"/>
</dbReference>
<dbReference type="CDD" id="cd01667">
    <property type="entry name" value="TGS_ThrRS"/>
    <property type="match status" value="1"/>
</dbReference>
<dbReference type="CDD" id="cd00860">
    <property type="entry name" value="ThrRS_anticodon"/>
    <property type="match status" value="1"/>
</dbReference>
<dbReference type="CDD" id="cd00771">
    <property type="entry name" value="ThrRS_core"/>
    <property type="match status" value="1"/>
</dbReference>
<dbReference type="FunFam" id="3.10.20.30:FF:000005">
    <property type="entry name" value="Threonine--tRNA ligase"/>
    <property type="match status" value="1"/>
</dbReference>
<dbReference type="FunFam" id="3.30.930.10:FF:000002">
    <property type="entry name" value="Threonine--tRNA ligase"/>
    <property type="match status" value="1"/>
</dbReference>
<dbReference type="FunFam" id="3.30.980.10:FF:000001">
    <property type="entry name" value="Threonine--tRNA ligase"/>
    <property type="match status" value="1"/>
</dbReference>
<dbReference type="FunFam" id="3.40.50.800:FF:000001">
    <property type="entry name" value="Threonine--tRNA ligase"/>
    <property type="match status" value="1"/>
</dbReference>
<dbReference type="Gene3D" id="3.10.20.30">
    <property type="match status" value="1"/>
</dbReference>
<dbReference type="Gene3D" id="3.30.54.20">
    <property type="match status" value="1"/>
</dbReference>
<dbReference type="Gene3D" id="3.40.50.800">
    <property type="entry name" value="Anticodon-binding domain"/>
    <property type="match status" value="1"/>
</dbReference>
<dbReference type="Gene3D" id="3.30.930.10">
    <property type="entry name" value="Bira Bifunctional Protein, Domain 2"/>
    <property type="match status" value="1"/>
</dbReference>
<dbReference type="Gene3D" id="3.30.980.10">
    <property type="entry name" value="Threonyl-trna Synthetase, Chain A, domain 2"/>
    <property type="match status" value="1"/>
</dbReference>
<dbReference type="HAMAP" id="MF_00184">
    <property type="entry name" value="Thr_tRNA_synth"/>
    <property type="match status" value="1"/>
</dbReference>
<dbReference type="InterPro" id="IPR002314">
    <property type="entry name" value="aa-tRNA-synt_IIb"/>
</dbReference>
<dbReference type="InterPro" id="IPR006195">
    <property type="entry name" value="aa-tRNA-synth_II"/>
</dbReference>
<dbReference type="InterPro" id="IPR045864">
    <property type="entry name" value="aa-tRNA-synth_II/BPL/LPL"/>
</dbReference>
<dbReference type="InterPro" id="IPR004154">
    <property type="entry name" value="Anticodon-bd"/>
</dbReference>
<dbReference type="InterPro" id="IPR036621">
    <property type="entry name" value="Anticodon-bd_dom_sf"/>
</dbReference>
<dbReference type="InterPro" id="IPR012675">
    <property type="entry name" value="Beta-grasp_dom_sf"/>
</dbReference>
<dbReference type="InterPro" id="IPR004095">
    <property type="entry name" value="TGS"/>
</dbReference>
<dbReference type="InterPro" id="IPR012676">
    <property type="entry name" value="TGS-like"/>
</dbReference>
<dbReference type="InterPro" id="IPR002320">
    <property type="entry name" value="Thr-tRNA-ligase_IIa"/>
</dbReference>
<dbReference type="InterPro" id="IPR018163">
    <property type="entry name" value="Thr/Ala-tRNA-synth_IIc_edit"/>
</dbReference>
<dbReference type="InterPro" id="IPR047246">
    <property type="entry name" value="ThrRS_anticodon"/>
</dbReference>
<dbReference type="InterPro" id="IPR033728">
    <property type="entry name" value="ThrRS_core"/>
</dbReference>
<dbReference type="InterPro" id="IPR012947">
    <property type="entry name" value="tRNA_SAD"/>
</dbReference>
<dbReference type="NCBIfam" id="TIGR00418">
    <property type="entry name" value="thrS"/>
    <property type="match status" value="1"/>
</dbReference>
<dbReference type="PANTHER" id="PTHR11451:SF44">
    <property type="entry name" value="THREONINE--TRNA LIGASE, CHLOROPLASTIC_MITOCHONDRIAL 2"/>
    <property type="match status" value="1"/>
</dbReference>
<dbReference type="PANTHER" id="PTHR11451">
    <property type="entry name" value="THREONINE-TRNA LIGASE"/>
    <property type="match status" value="1"/>
</dbReference>
<dbReference type="Pfam" id="PF03129">
    <property type="entry name" value="HGTP_anticodon"/>
    <property type="match status" value="1"/>
</dbReference>
<dbReference type="Pfam" id="PF02824">
    <property type="entry name" value="TGS"/>
    <property type="match status" value="1"/>
</dbReference>
<dbReference type="Pfam" id="PF00587">
    <property type="entry name" value="tRNA-synt_2b"/>
    <property type="match status" value="1"/>
</dbReference>
<dbReference type="Pfam" id="PF07973">
    <property type="entry name" value="tRNA_SAD"/>
    <property type="match status" value="1"/>
</dbReference>
<dbReference type="PRINTS" id="PR01047">
    <property type="entry name" value="TRNASYNTHTHR"/>
</dbReference>
<dbReference type="SMART" id="SM00863">
    <property type="entry name" value="tRNA_SAD"/>
    <property type="match status" value="1"/>
</dbReference>
<dbReference type="SUPFAM" id="SSF52954">
    <property type="entry name" value="Class II aaRS ABD-related"/>
    <property type="match status" value="1"/>
</dbReference>
<dbReference type="SUPFAM" id="SSF55681">
    <property type="entry name" value="Class II aaRS and biotin synthetases"/>
    <property type="match status" value="1"/>
</dbReference>
<dbReference type="SUPFAM" id="SSF81271">
    <property type="entry name" value="TGS-like"/>
    <property type="match status" value="1"/>
</dbReference>
<dbReference type="SUPFAM" id="SSF55186">
    <property type="entry name" value="ThrRS/AlaRS common domain"/>
    <property type="match status" value="1"/>
</dbReference>
<dbReference type="PROSITE" id="PS50862">
    <property type="entry name" value="AA_TRNA_LIGASE_II"/>
    <property type="match status" value="1"/>
</dbReference>
<dbReference type="PROSITE" id="PS51880">
    <property type="entry name" value="TGS"/>
    <property type="match status" value="1"/>
</dbReference>
<proteinExistence type="inferred from homology"/>
<comment type="function">
    <text evidence="1">Catalyzes the attachment of threonine to tRNA(Thr) in a two-step reaction: L-threonine is first activated by ATP to form Thr-AMP and then transferred to the acceptor end of tRNA(Thr). Also edits incorrectly charged L-seryl-tRNA(Thr).</text>
</comment>
<comment type="catalytic activity">
    <reaction evidence="1">
        <text>tRNA(Thr) + L-threonine + ATP = L-threonyl-tRNA(Thr) + AMP + diphosphate + H(+)</text>
        <dbReference type="Rhea" id="RHEA:24624"/>
        <dbReference type="Rhea" id="RHEA-COMP:9670"/>
        <dbReference type="Rhea" id="RHEA-COMP:9704"/>
        <dbReference type="ChEBI" id="CHEBI:15378"/>
        <dbReference type="ChEBI" id="CHEBI:30616"/>
        <dbReference type="ChEBI" id="CHEBI:33019"/>
        <dbReference type="ChEBI" id="CHEBI:57926"/>
        <dbReference type="ChEBI" id="CHEBI:78442"/>
        <dbReference type="ChEBI" id="CHEBI:78534"/>
        <dbReference type="ChEBI" id="CHEBI:456215"/>
        <dbReference type="EC" id="6.1.1.3"/>
    </reaction>
</comment>
<comment type="cofactor">
    <cofactor evidence="1">
        <name>Zn(2+)</name>
        <dbReference type="ChEBI" id="CHEBI:29105"/>
    </cofactor>
    <text evidence="1">Binds 1 zinc ion per subunit.</text>
</comment>
<comment type="subunit">
    <text evidence="1">Homodimer.</text>
</comment>
<comment type="subcellular location">
    <subcellularLocation>
        <location evidence="1">Cytoplasm</location>
    </subcellularLocation>
</comment>
<comment type="similarity">
    <text evidence="1">Belongs to the class-II aminoacyl-tRNA synthetase family.</text>
</comment>
<protein>
    <recommendedName>
        <fullName evidence="1">Threonine--tRNA ligase</fullName>
        <ecNumber evidence="1">6.1.1.3</ecNumber>
    </recommendedName>
    <alternativeName>
        <fullName evidence="1">Threonyl-tRNA synthetase</fullName>
        <shortName evidence="1">ThrRS</shortName>
    </alternativeName>
</protein>
<accession>A3PLC6</accession>
<feature type="chain" id="PRO_1000020489" description="Threonine--tRNA ligase">
    <location>
        <begin position="1"/>
        <end position="646"/>
    </location>
</feature>
<feature type="domain" description="TGS" evidence="2">
    <location>
        <begin position="1"/>
        <end position="63"/>
    </location>
</feature>
<feature type="region of interest" description="Catalytic" evidence="1">
    <location>
        <begin position="247"/>
        <end position="544"/>
    </location>
</feature>
<feature type="binding site" evidence="1">
    <location>
        <position position="344"/>
    </location>
    <ligand>
        <name>Zn(2+)</name>
        <dbReference type="ChEBI" id="CHEBI:29105"/>
    </ligand>
</feature>
<feature type="binding site" evidence="1">
    <location>
        <position position="395"/>
    </location>
    <ligand>
        <name>Zn(2+)</name>
        <dbReference type="ChEBI" id="CHEBI:29105"/>
    </ligand>
</feature>
<feature type="binding site" evidence="1">
    <location>
        <position position="521"/>
    </location>
    <ligand>
        <name>Zn(2+)</name>
        <dbReference type="ChEBI" id="CHEBI:29105"/>
    </ligand>
</feature>
<name>SYT_CERS1</name>
<evidence type="ECO:0000255" key="1">
    <source>
        <dbReference type="HAMAP-Rule" id="MF_00184"/>
    </source>
</evidence>
<evidence type="ECO:0000255" key="2">
    <source>
        <dbReference type="PROSITE-ProRule" id="PRU01228"/>
    </source>
</evidence>
<reference key="1">
    <citation type="submission" date="2007-02" db="EMBL/GenBank/DDBJ databases">
        <title>Complete sequence of chromosome 1 of Rhodobacter sphaeroides ATCC 17029.</title>
        <authorList>
            <person name="Copeland A."/>
            <person name="Lucas S."/>
            <person name="Lapidus A."/>
            <person name="Barry K."/>
            <person name="Detter J.C."/>
            <person name="Glavina del Rio T."/>
            <person name="Hammon N."/>
            <person name="Israni S."/>
            <person name="Dalin E."/>
            <person name="Tice H."/>
            <person name="Pitluck S."/>
            <person name="Kiss H."/>
            <person name="Brettin T."/>
            <person name="Bruce D."/>
            <person name="Han C."/>
            <person name="Tapia R."/>
            <person name="Gilna P."/>
            <person name="Schmutz J."/>
            <person name="Larimer F."/>
            <person name="Land M."/>
            <person name="Hauser L."/>
            <person name="Kyrpides N."/>
            <person name="Mikhailova N."/>
            <person name="Richardson P."/>
            <person name="Mackenzie C."/>
            <person name="Choudhary M."/>
            <person name="Donohue T.J."/>
            <person name="Kaplan S."/>
        </authorList>
    </citation>
    <scope>NUCLEOTIDE SEQUENCE [LARGE SCALE GENOMIC DNA]</scope>
    <source>
        <strain>ATCC 17029 / ATH 2.4.9</strain>
    </source>
</reference>